<feature type="chain" id="PRO_1000022447" description="Potassium-transporting ATPase ATP-binding subunit">
    <location>
        <begin position="1"/>
        <end position="682"/>
    </location>
</feature>
<feature type="transmembrane region" description="Helical" evidence="1">
    <location>
        <begin position="34"/>
        <end position="54"/>
    </location>
</feature>
<feature type="transmembrane region" description="Helical" evidence="1">
    <location>
        <begin position="62"/>
        <end position="82"/>
    </location>
</feature>
<feature type="transmembrane region" description="Helical" evidence="1">
    <location>
        <begin position="219"/>
        <end position="239"/>
    </location>
</feature>
<feature type="transmembrane region" description="Helical" evidence="1">
    <location>
        <begin position="254"/>
        <end position="274"/>
    </location>
</feature>
<feature type="transmembrane region" description="Helical" evidence="1">
    <location>
        <begin position="588"/>
        <end position="608"/>
    </location>
</feature>
<feature type="transmembrane region" description="Helical" evidence="1">
    <location>
        <begin position="616"/>
        <end position="636"/>
    </location>
</feature>
<feature type="transmembrane region" description="Helical" evidence="1">
    <location>
        <begin position="656"/>
        <end position="676"/>
    </location>
</feature>
<feature type="active site" description="4-aspartylphosphate intermediate" evidence="1">
    <location>
        <position position="307"/>
    </location>
</feature>
<feature type="binding site" evidence="1">
    <location>
        <position position="344"/>
    </location>
    <ligand>
        <name>ATP</name>
        <dbReference type="ChEBI" id="CHEBI:30616"/>
    </ligand>
</feature>
<feature type="binding site" evidence="1">
    <location>
        <position position="348"/>
    </location>
    <ligand>
        <name>ATP</name>
        <dbReference type="ChEBI" id="CHEBI:30616"/>
    </ligand>
</feature>
<feature type="binding site" evidence="1">
    <location>
        <begin position="377"/>
        <end position="384"/>
    </location>
    <ligand>
        <name>ATP</name>
        <dbReference type="ChEBI" id="CHEBI:30616"/>
    </ligand>
</feature>
<feature type="binding site" evidence="1">
    <location>
        <position position="395"/>
    </location>
    <ligand>
        <name>ATP</name>
        <dbReference type="ChEBI" id="CHEBI:30616"/>
    </ligand>
</feature>
<feature type="binding site" evidence="1">
    <location>
        <position position="518"/>
    </location>
    <ligand>
        <name>Mg(2+)</name>
        <dbReference type="ChEBI" id="CHEBI:18420"/>
    </ligand>
</feature>
<feature type="binding site" evidence="1">
    <location>
        <position position="522"/>
    </location>
    <ligand>
        <name>Mg(2+)</name>
        <dbReference type="ChEBI" id="CHEBI:18420"/>
    </ligand>
</feature>
<dbReference type="EC" id="7.2.2.6" evidence="1"/>
<dbReference type="EMBL" id="CP000038">
    <property type="protein sequence ID" value="AAZ87406.1"/>
    <property type="molecule type" value="Genomic_DNA"/>
</dbReference>
<dbReference type="RefSeq" id="WP_000087960.1">
    <property type="nucleotide sequence ID" value="NC_007384.1"/>
</dbReference>
<dbReference type="SMR" id="Q3Z4A6"/>
<dbReference type="GeneID" id="93776788"/>
<dbReference type="KEGG" id="ssn:SSON_0648"/>
<dbReference type="HOGENOM" id="CLU_025728_2_0_6"/>
<dbReference type="Proteomes" id="UP000002529">
    <property type="component" value="Chromosome"/>
</dbReference>
<dbReference type="GO" id="GO:0005886">
    <property type="term" value="C:plasma membrane"/>
    <property type="evidence" value="ECO:0007669"/>
    <property type="project" value="UniProtKB-SubCell"/>
</dbReference>
<dbReference type="GO" id="GO:0005524">
    <property type="term" value="F:ATP binding"/>
    <property type="evidence" value="ECO:0007669"/>
    <property type="project" value="UniProtKB-UniRule"/>
</dbReference>
<dbReference type="GO" id="GO:0016887">
    <property type="term" value="F:ATP hydrolysis activity"/>
    <property type="evidence" value="ECO:0007669"/>
    <property type="project" value="InterPro"/>
</dbReference>
<dbReference type="GO" id="GO:0000287">
    <property type="term" value="F:magnesium ion binding"/>
    <property type="evidence" value="ECO:0007669"/>
    <property type="project" value="UniProtKB-UniRule"/>
</dbReference>
<dbReference type="GO" id="GO:0008556">
    <property type="term" value="F:P-type potassium transmembrane transporter activity"/>
    <property type="evidence" value="ECO:0007669"/>
    <property type="project" value="UniProtKB-UniRule"/>
</dbReference>
<dbReference type="CDD" id="cd02078">
    <property type="entry name" value="P-type_ATPase_K"/>
    <property type="match status" value="1"/>
</dbReference>
<dbReference type="FunFam" id="2.70.150.10:FF:000010">
    <property type="entry name" value="Potassium-transporting ATPase ATP-binding subunit"/>
    <property type="match status" value="1"/>
</dbReference>
<dbReference type="FunFam" id="3.40.1110.10:FF:000007">
    <property type="entry name" value="Potassium-transporting ATPase ATP-binding subunit"/>
    <property type="match status" value="1"/>
</dbReference>
<dbReference type="Gene3D" id="3.40.1110.10">
    <property type="entry name" value="Calcium-transporting ATPase, cytoplasmic domain N"/>
    <property type="match status" value="1"/>
</dbReference>
<dbReference type="Gene3D" id="2.70.150.10">
    <property type="entry name" value="Calcium-transporting ATPase, cytoplasmic transduction domain A"/>
    <property type="match status" value="1"/>
</dbReference>
<dbReference type="Gene3D" id="3.40.50.1000">
    <property type="entry name" value="HAD superfamily/HAD-like"/>
    <property type="match status" value="1"/>
</dbReference>
<dbReference type="HAMAP" id="MF_00285">
    <property type="entry name" value="KdpB"/>
    <property type="match status" value="1"/>
</dbReference>
<dbReference type="InterPro" id="IPR023299">
    <property type="entry name" value="ATPase_P-typ_cyto_dom_N"/>
</dbReference>
<dbReference type="InterPro" id="IPR018303">
    <property type="entry name" value="ATPase_P-typ_P_site"/>
</dbReference>
<dbReference type="InterPro" id="IPR023298">
    <property type="entry name" value="ATPase_P-typ_TM_dom_sf"/>
</dbReference>
<dbReference type="InterPro" id="IPR008250">
    <property type="entry name" value="ATPase_P-typ_transduc_dom_A_sf"/>
</dbReference>
<dbReference type="InterPro" id="IPR036412">
    <property type="entry name" value="HAD-like_sf"/>
</dbReference>
<dbReference type="InterPro" id="IPR023214">
    <property type="entry name" value="HAD_sf"/>
</dbReference>
<dbReference type="InterPro" id="IPR006391">
    <property type="entry name" value="P-type_ATPase_bsu_IA"/>
</dbReference>
<dbReference type="InterPro" id="IPR001757">
    <property type="entry name" value="P_typ_ATPase"/>
</dbReference>
<dbReference type="InterPro" id="IPR044492">
    <property type="entry name" value="P_typ_ATPase_HD_dom"/>
</dbReference>
<dbReference type="NCBIfam" id="TIGR01494">
    <property type="entry name" value="ATPase_P-type"/>
    <property type="match status" value="2"/>
</dbReference>
<dbReference type="NCBIfam" id="TIGR01497">
    <property type="entry name" value="kdpB"/>
    <property type="match status" value="1"/>
</dbReference>
<dbReference type="PANTHER" id="PTHR43743">
    <property type="entry name" value="POTASSIUM-TRANSPORTING ATPASE ATP-BINDING SUBUNIT"/>
    <property type="match status" value="1"/>
</dbReference>
<dbReference type="PANTHER" id="PTHR43743:SF1">
    <property type="entry name" value="POTASSIUM-TRANSPORTING ATPASE ATP-BINDING SUBUNIT"/>
    <property type="match status" value="1"/>
</dbReference>
<dbReference type="Pfam" id="PF00122">
    <property type="entry name" value="E1-E2_ATPase"/>
    <property type="match status" value="1"/>
</dbReference>
<dbReference type="Pfam" id="PF00702">
    <property type="entry name" value="Hydrolase"/>
    <property type="match status" value="1"/>
</dbReference>
<dbReference type="PRINTS" id="PR00119">
    <property type="entry name" value="CATATPASE"/>
</dbReference>
<dbReference type="SFLD" id="SFLDG00002">
    <property type="entry name" value="C1.7:_P-type_atpase_like"/>
    <property type="match status" value="1"/>
</dbReference>
<dbReference type="SFLD" id="SFLDF00027">
    <property type="entry name" value="p-type_atpase"/>
    <property type="match status" value="1"/>
</dbReference>
<dbReference type="SUPFAM" id="SSF81653">
    <property type="entry name" value="Calcium ATPase, transduction domain A"/>
    <property type="match status" value="1"/>
</dbReference>
<dbReference type="SUPFAM" id="SSF81665">
    <property type="entry name" value="Calcium ATPase, transmembrane domain M"/>
    <property type="match status" value="1"/>
</dbReference>
<dbReference type="SUPFAM" id="SSF56784">
    <property type="entry name" value="HAD-like"/>
    <property type="match status" value="1"/>
</dbReference>
<dbReference type="SUPFAM" id="SSF81660">
    <property type="entry name" value="Metal cation-transporting ATPase, ATP-binding domain N"/>
    <property type="match status" value="1"/>
</dbReference>
<dbReference type="PROSITE" id="PS00154">
    <property type="entry name" value="ATPASE_E1_E2"/>
    <property type="match status" value="1"/>
</dbReference>
<reference key="1">
    <citation type="journal article" date="2005" name="Nucleic Acids Res.">
        <title>Genome dynamics and diversity of Shigella species, the etiologic agents of bacillary dysentery.</title>
        <authorList>
            <person name="Yang F."/>
            <person name="Yang J."/>
            <person name="Zhang X."/>
            <person name="Chen L."/>
            <person name="Jiang Y."/>
            <person name="Yan Y."/>
            <person name="Tang X."/>
            <person name="Wang J."/>
            <person name="Xiong Z."/>
            <person name="Dong J."/>
            <person name="Xue Y."/>
            <person name="Zhu Y."/>
            <person name="Xu X."/>
            <person name="Sun L."/>
            <person name="Chen S."/>
            <person name="Nie H."/>
            <person name="Peng J."/>
            <person name="Xu J."/>
            <person name="Wang Y."/>
            <person name="Yuan Z."/>
            <person name="Wen Y."/>
            <person name="Yao Z."/>
            <person name="Shen Y."/>
            <person name="Qiang B."/>
            <person name="Hou Y."/>
            <person name="Yu J."/>
            <person name="Jin Q."/>
        </authorList>
    </citation>
    <scope>NUCLEOTIDE SEQUENCE [LARGE SCALE GENOMIC DNA]</scope>
    <source>
        <strain>Ss046</strain>
    </source>
</reference>
<evidence type="ECO:0000255" key="1">
    <source>
        <dbReference type="HAMAP-Rule" id="MF_00285"/>
    </source>
</evidence>
<gene>
    <name evidence="1" type="primary">kdpB</name>
    <name type="ordered locus">SSON_0648</name>
</gene>
<sequence>MSRKQLALFEPTLVVQALKEAVKKLNPQAQWRNPVMFIVWIGSLLTTCISIAMASGAMPGNALFSAAISGWLWVTVLFANFAEALAEGRSKAQANSLKGVKKTAFARKLREPKYGAAADKVPADQLRKGDIVLVEAGDIIPCDGEVIEGGASVDESAITGESAPVIRESGGDFASVTGGTRILSDWLVIECSVNPGETFLDRMIAMVEGAQRRKTPNEIALTILLIALTIVFLLATATLWPFSAWGGNAVSVTVLVALLVCLIPTTIGGLLSAIGVAGMSRMLGANVIATSGRAVEAAGDVDVLLLDKTGTITLGNRQASEFIPAQGVDEKTLADAAQLASLADETPEGRSIVILAKQRFNLRERDVQSLHATFVPFTAQSRMSGINIDNRMIRKGSVDAIRRHIEANGGHFPADVDQKVDQVARQGATPLVVVEGSRVLGVIALKDIVKGGIKERFAQLRKMGIKTVMITGDNRLTAAAIAAEAGVDDFLAEATPEAKLALIRQYQAEGRLVAMTGDGTNDAPALAQADVAVAMNSGTQAAKEAGNMVDLDSNPTKLIEVVHIGKQMLMTRGSLTTFSIANDVAKYFAIIPAAFAATYPQLNALNIMRLHSPDSAILSAVIFNALIIVFLIPLALKGVSYKPLTASAMLRRNLWIYGLGGLLVPFIGIKVIDLLLTVCGLV</sequence>
<keyword id="KW-0067">ATP-binding</keyword>
<keyword id="KW-0997">Cell inner membrane</keyword>
<keyword id="KW-1003">Cell membrane</keyword>
<keyword id="KW-0406">Ion transport</keyword>
<keyword id="KW-0460">Magnesium</keyword>
<keyword id="KW-0472">Membrane</keyword>
<keyword id="KW-0479">Metal-binding</keyword>
<keyword id="KW-0547">Nucleotide-binding</keyword>
<keyword id="KW-0597">Phosphoprotein</keyword>
<keyword id="KW-0630">Potassium</keyword>
<keyword id="KW-0633">Potassium transport</keyword>
<keyword id="KW-1185">Reference proteome</keyword>
<keyword id="KW-1278">Translocase</keyword>
<keyword id="KW-0812">Transmembrane</keyword>
<keyword id="KW-1133">Transmembrane helix</keyword>
<keyword id="KW-0813">Transport</keyword>
<accession>Q3Z4A6</accession>
<protein>
    <recommendedName>
        <fullName evidence="1">Potassium-transporting ATPase ATP-binding subunit</fullName>
        <ecNumber evidence="1">7.2.2.6</ecNumber>
    </recommendedName>
    <alternativeName>
        <fullName evidence="1">ATP phosphohydrolase [potassium-transporting] B chain</fullName>
    </alternativeName>
    <alternativeName>
        <fullName evidence="1">Potassium-binding and translocating subunit B</fullName>
    </alternativeName>
    <alternativeName>
        <fullName evidence="1">Potassium-translocating ATPase B chain</fullName>
    </alternativeName>
</protein>
<organism>
    <name type="scientific">Shigella sonnei (strain Ss046)</name>
    <dbReference type="NCBI Taxonomy" id="300269"/>
    <lineage>
        <taxon>Bacteria</taxon>
        <taxon>Pseudomonadati</taxon>
        <taxon>Pseudomonadota</taxon>
        <taxon>Gammaproteobacteria</taxon>
        <taxon>Enterobacterales</taxon>
        <taxon>Enterobacteriaceae</taxon>
        <taxon>Shigella</taxon>
    </lineage>
</organism>
<comment type="function">
    <text evidence="1">Part of the high-affinity ATP-driven potassium transport (or Kdp) system, which catalyzes the hydrolysis of ATP coupled with the electrogenic transport of potassium into the cytoplasm. This subunit is responsible for energy coupling to the transport system and for the release of the potassium ions to the cytoplasm.</text>
</comment>
<comment type="catalytic activity">
    <reaction evidence="1">
        <text>K(+)(out) + ATP + H2O = K(+)(in) + ADP + phosphate + H(+)</text>
        <dbReference type="Rhea" id="RHEA:16777"/>
        <dbReference type="ChEBI" id="CHEBI:15377"/>
        <dbReference type="ChEBI" id="CHEBI:15378"/>
        <dbReference type="ChEBI" id="CHEBI:29103"/>
        <dbReference type="ChEBI" id="CHEBI:30616"/>
        <dbReference type="ChEBI" id="CHEBI:43474"/>
        <dbReference type="ChEBI" id="CHEBI:456216"/>
        <dbReference type="EC" id="7.2.2.6"/>
    </reaction>
    <physiologicalReaction direction="left-to-right" evidence="1">
        <dbReference type="Rhea" id="RHEA:16778"/>
    </physiologicalReaction>
</comment>
<comment type="subunit">
    <text evidence="1">The system is composed of three essential subunits: KdpA, KdpB and KdpC.</text>
</comment>
<comment type="subcellular location">
    <subcellularLocation>
        <location evidence="1">Cell inner membrane</location>
        <topology evidence="1">Multi-pass membrane protein</topology>
    </subcellularLocation>
</comment>
<comment type="similarity">
    <text evidence="1">Belongs to the cation transport ATPase (P-type) (TC 3.A.3) family. Type IA subfamily.</text>
</comment>
<proteinExistence type="inferred from homology"/>
<name>KDPB_SHISS</name>